<feature type="chain" id="PRO_1000020137" description="Methionyl-tRNA formyltransferase">
    <location>
        <begin position="1"/>
        <end position="314"/>
    </location>
</feature>
<feature type="binding site" evidence="1">
    <location>
        <begin position="113"/>
        <end position="116"/>
    </location>
    <ligand>
        <name>(6S)-5,6,7,8-tetrahydrofolate</name>
        <dbReference type="ChEBI" id="CHEBI:57453"/>
    </ligand>
</feature>
<evidence type="ECO:0000255" key="1">
    <source>
        <dbReference type="HAMAP-Rule" id="MF_00182"/>
    </source>
</evidence>
<gene>
    <name evidence="1" type="primary">fmt</name>
    <name type="ordered locus">PST_0020</name>
</gene>
<accession>A4VFH7</accession>
<proteinExistence type="inferred from homology"/>
<name>FMT_STUS1</name>
<reference key="1">
    <citation type="journal article" date="2008" name="Proc. Natl. Acad. Sci. U.S.A.">
        <title>Nitrogen fixation island and rhizosphere competence traits in the genome of root-associated Pseudomonas stutzeri A1501.</title>
        <authorList>
            <person name="Yan Y."/>
            <person name="Yang J."/>
            <person name="Dou Y."/>
            <person name="Chen M."/>
            <person name="Ping S."/>
            <person name="Peng J."/>
            <person name="Lu W."/>
            <person name="Zhang W."/>
            <person name="Yao Z."/>
            <person name="Li H."/>
            <person name="Liu W."/>
            <person name="He S."/>
            <person name="Geng L."/>
            <person name="Zhang X."/>
            <person name="Yang F."/>
            <person name="Yu H."/>
            <person name="Zhan Y."/>
            <person name="Li D."/>
            <person name="Lin Z."/>
            <person name="Wang Y."/>
            <person name="Elmerich C."/>
            <person name="Lin M."/>
            <person name="Jin Q."/>
        </authorList>
    </citation>
    <scope>NUCLEOTIDE SEQUENCE [LARGE SCALE GENOMIC DNA]</scope>
    <source>
        <strain>A1501</strain>
    </source>
</reference>
<comment type="function">
    <text evidence="1">Attaches a formyl group to the free amino group of methionyl-tRNA(fMet). The formyl group appears to play a dual role in the initiator identity of N-formylmethionyl-tRNA by promoting its recognition by IF2 and preventing the misappropriation of this tRNA by the elongation apparatus.</text>
</comment>
<comment type="catalytic activity">
    <reaction evidence="1">
        <text>L-methionyl-tRNA(fMet) + (6R)-10-formyltetrahydrofolate = N-formyl-L-methionyl-tRNA(fMet) + (6S)-5,6,7,8-tetrahydrofolate + H(+)</text>
        <dbReference type="Rhea" id="RHEA:24380"/>
        <dbReference type="Rhea" id="RHEA-COMP:9952"/>
        <dbReference type="Rhea" id="RHEA-COMP:9953"/>
        <dbReference type="ChEBI" id="CHEBI:15378"/>
        <dbReference type="ChEBI" id="CHEBI:57453"/>
        <dbReference type="ChEBI" id="CHEBI:78530"/>
        <dbReference type="ChEBI" id="CHEBI:78844"/>
        <dbReference type="ChEBI" id="CHEBI:195366"/>
        <dbReference type="EC" id="2.1.2.9"/>
    </reaction>
</comment>
<comment type="similarity">
    <text evidence="1">Belongs to the Fmt family.</text>
</comment>
<keyword id="KW-0648">Protein biosynthesis</keyword>
<keyword id="KW-1185">Reference proteome</keyword>
<keyword id="KW-0808">Transferase</keyword>
<dbReference type="EC" id="2.1.2.9" evidence="1"/>
<dbReference type="EMBL" id="CP000304">
    <property type="protein sequence ID" value="ABP77728.1"/>
    <property type="molecule type" value="Genomic_DNA"/>
</dbReference>
<dbReference type="RefSeq" id="WP_011911271.1">
    <property type="nucleotide sequence ID" value="NC_009434.1"/>
</dbReference>
<dbReference type="SMR" id="A4VFH7"/>
<dbReference type="KEGG" id="psa:PST_0020"/>
<dbReference type="eggNOG" id="COG0223">
    <property type="taxonomic scope" value="Bacteria"/>
</dbReference>
<dbReference type="HOGENOM" id="CLU_033347_1_2_6"/>
<dbReference type="Proteomes" id="UP000000233">
    <property type="component" value="Chromosome"/>
</dbReference>
<dbReference type="GO" id="GO:0005829">
    <property type="term" value="C:cytosol"/>
    <property type="evidence" value="ECO:0007669"/>
    <property type="project" value="TreeGrafter"/>
</dbReference>
<dbReference type="GO" id="GO:0004479">
    <property type="term" value="F:methionyl-tRNA formyltransferase activity"/>
    <property type="evidence" value="ECO:0007669"/>
    <property type="project" value="UniProtKB-UniRule"/>
</dbReference>
<dbReference type="CDD" id="cd08646">
    <property type="entry name" value="FMT_core_Met-tRNA-FMT_N"/>
    <property type="match status" value="1"/>
</dbReference>
<dbReference type="CDD" id="cd08704">
    <property type="entry name" value="Met_tRNA_FMT_C"/>
    <property type="match status" value="1"/>
</dbReference>
<dbReference type="FunFam" id="3.40.50.170:FF:000003">
    <property type="entry name" value="Methionyl-tRNA formyltransferase"/>
    <property type="match status" value="1"/>
</dbReference>
<dbReference type="Gene3D" id="3.10.25.10">
    <property type="entry name" value="Formyl transferase, C-terminal domain"/>
    <property type="match status" value="1"/>
</dbReference>
<dbReference type="Gene3D" id="3.40.50.170">
    <property type="entry name" value="Formyl transferase, N-terminal domain"/>
    <property type="match status" value="1"/>
</dbReference>
<dbReference type="HAMAP" id="MF_00182">
    <property type="entry name" value="Formyl_trans"/>
    <property type="match status" value="1"/>
</dbReference>
<dbReference type="InterPro" id="IPR005794">
    <property type="entry name" value="Fmt"/>
</dbReference>
<dbReference type="InterPro" id="IPR005793">
    <property type="entry name" value="Formyl_trans_C"/>
</dbReference>
<dbReference type="InterPro" id="IPR037022">
    <property type="entry name" value="Formyl_trans_C_sf"/>
</dbReference>
<dbReference type="InterPro" id="IPR002376">
    <property type="entry name" value="Formyl_transf_N"/>
</dbReference>
<dbReference type="InterPro" id="IPR036477">
    <property type="entry name" value="Formyl_transf_N_sf"/>
</dbReference>
<dbReference type="InterPro" id="IPR011034">
    <property type="entry name" value="Formyl_transferase-like_C_sf"/>
</dbReference>
<dbReference type="InterPro" id="IPR001555">
    <property type="entry name" value="GART_AS"/>
</dbReference>
<dbReference type="InterPro" id="IPR044135">
    <property type="entry name" value="Met-tRNA-FMT_C"/>
</dbReference>
<dbReference type="InterPro" id="IPR041711">
    <property type="entry name" value="Met-tRNA-FMT_N"/>
</dbReference>
<dbReference type="NCBIfam" id="TIGR00460">
    <property type="entry name" value="fmt"/>
    <property type="match status" value="1"/>
</dbReference>
<dbReference type="PANTHER" id="PTHR11138">
    <property type="entry name" value="METHIONYL-TRNA FORMYLTRANSFERASE"/>
    <property type="match status" value="1"/>
</dbReference>
<dbReference type="PANTHER" id="PTHR11138:SF5">
    <property type="entry name" value="METHIONYL-TRNA FORMYLTRANSFERASE, MITOCHONDRIAL"/>
    <property type="match status" value="1"/>
</dbReference>
<dbReference type="Pfam" id="PF02911">
    <property type="entry name" value="Formyl_trans_C"/>
    <property type="match status" value="1"/>
</dbReference>
<dbReference type="Pfam" id="PF00551">
    <property type="entry name" value="Formyl_trans_N"/>
    <property type="match status" value="1"/>
</dbReference>
<dbReference type="SUPFAM" id="SSF50486">
    <property type="entry name" value="FMT C-terminal domain-like"/>
    <property type="match status" value="1"/>
</dbReference>
<dbReference type="SUPFAM" id="SSF53328">
    <property type="entry name" value="Formyltransferase"/>
    <property type="match status" value="1"/>
</dbReference>
<dbReference type="PROSITE" id="PS00373">
    <property type="entry name" value="GART"/>
    <property type="match status" value="1"/>
</dbReference>
<protein>
    <recommendedName>
        <fullName evidence="1">Methionyl-tRNA formyltransferase</fullName>
        <ecNumber evidence="1">2.1.2.9</ecNumber>
    </recommendedName>
</protein>
<sequence length="314" mass="33250">MTQPLRIVFAGTPEFAAQHLQALLDAGKSIVAVYTQPDRPAGRGQKLMPSPVKQLAVQHDIPVLQPQTLRDPAAQAELAALQADLMVVVAYGLILPQAVLDLPRLGCINSHASLLPRWRGAAPIQRAIEAGDSESGVTVMQMEAGLDTGPMLLKVNTPISDEDTGGSLHDRLALLGAHAVVKAVDALAAGTLTPEVQDDSLATYAHKLSKDEARVDWTRPAVELERLIRAFNPWPICHSTLNGETLKIHAAQLGEGRGVPGLILDASKAGLTVACGEGALSLTRLQLPGGKPLGFGDLYNSRREQFAPGLVLGQ</sequence>
<organism>
    <name type="scientific">Stutzerimonas stutzeri (strain A1501)</name>
    <name type="common">Pseudomonas stutzeri</name>
    <dbReference type="NCBI Taxonomy" id="379731"/>
    <lineage>
        <taxon>Bacteria</taxon>
        <taxon>Pseudomonadati</taxon>
        <taxon>Pseudomonadota</taxon>
        <taxon>Gammaproteobacteria</taxon>
        <taxon>Pseudomonadales</taxon>
        <taxon>Pseudomonadaceae</taxon>
        <taxon>Stutzerimonas</taxon>
    </lineage>
</organism>